<dbReference type="EC" id="4.2.1.20" evidence="1"/>
<dbReference type="EMBL" id="CP001349">
    <property type="protein sequence ID" value="ACL56611.1"/>
    <property type="molecule type" value="Genomic_DNA"/>
</dbReference>
<dbReference type="RefSeq" id="WP_015928305.1">
    <property type="nucleotide sequence ID" value="NC_011894.1"/>
</dbReference>
<dbReference type="SMR" id="B8IPW1"/>
<dbReference type="STRING" id="460265.Mnod_1621"/>
<dbReference type="KEGG" id="mno:Mnod_1621"/>
<dbReference type="eggNOG" id="COG0159">
    <property type="taxonomic scope" value="Bacteria"/>
</dbReference>
<dbReference type="HOGENOM" id="CLU_016734_0_0_5"/>
<dbReference type="OrthoDB" id="9804578at2"/>
<dbReference type="UniPathway" id="UPA00035">
    <property type="reaction ID" value="UER00044"/>
</dbReference>
<dbReference type="Proteomes" id="UP000008207">
    <property type="component" value="Chromosome"/>
</dbReference>
<dbReference type="GO" id="GO:0005829">
    <property type="term" value="C:cytosol"/>
    <property type="evidence" value="ECO:0007669"/>
    <property type="project" value="TreeGrafter"/>
</dbReference>
<dbReference type="GO" id="GO:0004834">
    <property type="term" value="F:tryptophan synthase activity"/>
    <property type="evidence" value="ECO:0007669"/>
    <property type="project" value="UniProtKB-UniRule"/>
</dbReference>
<dbReference type="CDD" id="cd04724">
    <property type="entry name" value="Tryptophan_synthase_alpha"/>
    <property type="match status" value="1"/>
</dbReference>
<dbReference type="FunFam" id="3.20.20.70:FF:000037">
    <property type="entry name" value="Tryptophan synthase alpha chain"/>
    <property type="match status" value="1"/>
</dbReference>
<dbReference type="Gene3D" id="3.20.20.70">
    <property type="entry name" value="Aldolase class I"/>
    <property type="match status" value="1"/>
</dbReference>
<dbReference type="HAMAP" id="MF_00131">
    <property type="entry name" value="Trp_synth_alpha"/>
    <property type="match status" value="1"/>
</dbReference>
<dbReference type="InterPro" id="IPR013785">
    <property type="entry name" value="Aldolase_TIM"/>
</dbReference>
<dbReference type="InterPro" id="IPR011060">
    <property type="entry name" value="RibuloseP-bd_barrel"/>
</dbReference>
<dbReference type="InterPro" id="IPR002028">
    <property type="entry name" value="Trp_synthase_suA"/>
</dbReference>
<dbReference type="NCBIfam" id="TIGR00262">
    <property type="entry name" value="trpA"/>
    <property type="match status" value="1"/>
</dbReference>
<dbReference type="PANTHER" id="PTHR43406:SF1">
    <property type="entry name" value="TRYPTOPHAN SYNTHASE ALPHA CHAIN, CHLOROPLASTIC"/>
    <property type="match status" value="1"/>
</dbReference>
<dbReference type="PANTHER" id="PTHR43406">
    <property type="entry name" value="TRYPTOPHAN SYNTHASE, ALPHA CHAIN"/>
    <property type="match status" value="1"/>
</dbReference>
<dbReference type="Pfam" id="PF00290">
    <property type="entry name" value="Trp_syntA"/>
    <property type="match status" value="1"/>
</dbReference>
<dbReference type="SUPFAM" id="SSF51366">
    <property type="entry name" value="Ribulose-phoshate binding barrel"/>
    <property type="match status" value="1"/>
</dbReference>
<protein>
    <recommendedName>
        <fullName evidence="1">Tryptophan synthase alpha chain</fullName>
        <ecNumber evidence="1">4.2.1.20</ecNumber>
    </recommendedName>
</protein>
<evidence type="ECO:0000255" key="1">
    <source>
        <dbReference type="HAMAP-Rule" id="MF_00131"/>
    </source>
</evidence>
<sequence>MTTRLDDTFARCRAEGRAALVTYVMAGDPDPETSFAVLRALPAAGADIVEFGLPFTDPMADGPAIQAAGLRALKAGQSVARTLDLVRRFRAEDPRTPVILMGYYNPIYTYGVPRFLADAVAAGVDGLIVVDLPPEEDDELCLPARQAGLAFIRLATPTTDERRLPAVLANTSGFVYYVSITGITGAATPDFGAVASAVARIRAQTALPVVVGFGVKTGEHAAAIARNADGVVVGSALVDTLARSLDLEGRATSGSVAAVLALVRDLAAGVRSAAGGAA</sequence>
<keyword id="KW-0028">Amino-acid biosynthesis</keyword>
<keyword id="KW-0057">Aromatic amino acid biosynthesis</keyword>
<keyword id="KW-0456">Lyase</keyword>
<keyword id="KW-1185">Reference proteome</keyword>
<keyword id="KW-0822">Tryptophan biosynthesis</keyword>
<accession>B8IPW1</accession>
<organism>
    <name type="scientific">Methylobacterium nodulans (strain LMG 21967 / CNCM I-2342 / ORS 2060)</name>
    <dbReference type="NCBI Taxonomy" id="460265"/>
    <lineage>
        <taxon>Bacteria</taxon>
        <taxon>Pseudomonadati</taxon>
        <taxon>Pseudomonadota</taxon>
        <taxon>Alphaproteobacteria</taxon>
        <taxon>Hyphomicrobiales</taxon>
        <taxon>Methylobacteriaceae</taxon>
        <taxon>Methylobacterium</taxon>
    </lineage>
</organism>
<comment type="function">
    <text evidence="1">The alpha subunit is responsible for the aldol cleavage of indoleglycerol phosphate to indole and glyceraldehyde 3-phosphate.</text>
</comment>
<comment type="catalytic activity">
    <reaction evidence="1">
        <text>(1S,2R)-1-C-(indol-3-yl)glycerol 3-phosphate + L-serine = D-glyceraldehyde 3-phosphate + L-tryptophan + H2O</text>
        <dbReference type="Rhea" id="RHEA:10532"/>
        <dbReference type="ChEBI" id="CHEBI:15377"/>
        <dbReference type="ChEBI" id="CHEBI:33384"/>
        <dbReference type="ChEBI" id="CHEBI:57912"/>
        <dbReference type="ChEBI" id="CHEBI:58866"/>
        <dbReference type="ChEBI" id="CHEBI:59776"/>
        <dbReference type="EC" id="4.2.1.20"/>
    </reaction>
</comment>
<comment type="pathway">
    <text evidence="1">Amino-acid biosynthesis; L-tryptophan biosynthesis; L-tryptophan from chorismate: step 5/5.</text>
</comment>
<comment type="subunit">
    <text evidence="1">Tetramer of two alpha and two beta chains.</text>
</comment>
<comment type="similarity">
    <text evidence="1">Belongs to the TrpA family.</text>
</comment>
<reference key="1">
    <citation type="submission" date="2009-01" db="EMBL/GenBank/DDBJ databases">
        <title>Complete sequence of chromosome of Methylobacterium nodulans ORS 2060.</title>
        <authorList>
            <consortium name="US DOE Joint Genome Institute"/>
            <person name="Lucas S."/>
            <person name="Copeland A."/>
            <person name="Lapidus A."/>
            <person name="Glavina del Rio T."/>
            <person name="Dalin E."/>
            <person name="Tice H."/>
            <person name="Bruce D."/>
            <person name="Goodwin L."/>
            <person name="Pitluck S."/>
            <person name="Sims D."/>
            <person name="Brettin T."/>
            <person name="Detter J.C."/>
            <person name="Han C."/>
            <person name="Larimer F."/>
            <person name="Land M."/>
            <person name="Hauser L."/>
            <person name="Kyrpides N."/>
            <person name="Ivanova N."/>
            <person name="Marx C.J."/>
            <person name="Richardson P."/>
        </authorList>
    </citation>
    <scope>NUCLEOTIDE SEQUENCE [LARGE SCALE GENOMIC DNA]</scope>
    <source>
        <strain>LMG 21967 / CNCM I-2342 / ORS 2060</strain>
    </source>
</reference>
<feature type="chain" id="PRO_1000198718" description="Tryptophan synthase alpha chain">
    <location>
        <begin position="1"/>
        <end position="278"/>
    </location>
</feature>
<feature type="active site" description="Proton acceptor" evidence="1">
    <location>
        <position position="50"/>
    </location>
</feature>
<feature type="active site" description="Proton acceptor" evidence="1">
    <location>
        <position position="61"/>
    </location>
</feature>
<proteinExistence type="inferred from homology"/>
<gene>
    <name evidence="1" type="primary">trpA</name>
    <name type="ordered locus">Mnod_1621</name>
</gene>
<name>TRPA_METNO</name>